<protein>
    <recommendedName>
        <fullName evidence="1">UPF0235 protein YggU</fullName>
    </recommendedName>
</protein>
<name>YGGU_ECOSE</name>
<sequence>MSAVTVNDDGLVLRLYIQPKASRDSIVGLHGDEVKVAITAPPVDGQANSHLVKFLGKQFRVAKSQVVIEKGELGRHKQIKIINPQQIPPEIAALIN</sequence>
<dbReference type="EMBL" id="AP009240">
    <property type="protein sequence ID" value="BAG78745.1"/>
    <property type="molecule type" value="Genomic_DNA"/>
</dbReference>
<dbReference type="RefSeq" id="WP_001277222.1">
    <property type="nucleotide sequence ID" value="NC_011415.1"/>
</dbReference>
<dbReference type="SMR" id="B6I789"/>
<dbReference type="GeneID" id="86861043"/>
<dbReference type="KEGG" id="ecy:ECSE_3221"/>
<dbReference type="HOGENOM" id="CLU_130694_5_0_6"/>
<dbReference type="Proteomes" id="UP000008199">
    <property type="component" value="Chromosome"/>
</dbReference>
<dbReference type="GO" id="GO:0005737">
    <property type="term" value="C:cytoplasm"/>
    <property type="evidence" value="ECO:0007669"/>
    <property type="project" value="TreeGrafter"/>
</dbReference>
<dbReference type="Gene3D" id="3.30.1200.10">
    <property type="entry name" value="YggU-like"/>
    <property type="match status" value="1"/>
</dbReference>
<dbReference type="HAMAP" id="MF_00634">
    <property type="entry name" value="UPF0235"/>
    <property type="match status" value="1"/>
</dbReference>
<dbReference type="InterPro" id="IPR003746">
    <property type="entry name" value="DUF167"/>
</dbReference>
<dbReference type="InterPro" id="IPR036591">
    <property type="entry name" value="YggU-like_sf"/>
</dbReference>
<dbReference type="NCBIfam" id="TIGR00251">
    <property type="entry name" value="DUF167 family protein"/>
    <property type="match status" value="1"/>
</dbReference>
<dbReference type="NCBIfam" id="NF003466">
    <property type="entry name" value="PRK05090.1"/>
    <property type="match status" value="1"/>
</dbReference>
<dbReference type="PANTHER" id="PTHR13420">
    <property type="entry name" value="UPF0235 PROTEIN C15ORF40"/>
    <property type="match status" value="1"/>
</dbReference>
<dbReference type="PANTHER" id="PTHR13420:SF7">
    <property type="entry name" value="UPF0235 PROTEIN C15ORF40"/>
    <property type="match status" value="1"/>
</dbReference>
<dbReference type="Pfam" id="PF02594">
    <property type="entry name" value="DUF167"/>
    <property type="match status" value="1"/>
</dbReference>
<dbReference type="SMART" id="SM01152">
    <property type="entry name" value="DUF167"/>
    <property type="match status" value="1"/>
</dbReference>
<dbReference type="SUPFAM" id="SSF69786">
    <property type="entry name" value="YggU-like"/>
    <property type="match status" value="1"/>
</dbReference>
<gene>
    <name evidence="1" type="primary">yggU</name>
    <name type="ordered locus">ECSE_3221</name>
</gene>
<feature type="chain" id="PRO_1000130684" description="UPF0235 protein YggU">
    <location>
        <begin position="1"/>
        <end position="96"/>
    </location>
</feature>
<organism>
    <name type="scientific">Escherichia coli (strain SE11)</name>
    <dbReference type="NCBI Taxonomy" id="409438"/>
    <lineage>
        <taxon>Bacteria</taxon>
        <taxon>Pseudomonadati</taxon>
        <taxon>Pseudomonadota</taxon>
        <taxon>Gammaproteobacteria</taxon>
        <taxon>Enterobacterales</taxon>
        <taxon>Enterobacteriaceae</taxon>
        <taxon>Escherichia</taxon>
    </lineage>
</organism>
<comment type="similarity">
    <text evidence="1">Belongs to the UPF0235 family.</text>
</comment>
<proteinExistence type="inferred from homology"/>
<accession>B6I789</accession>
<reference key="1">
    <citation type="journal article" date="2008" name="DNA Res.">
        <title>Complete genome sequence and comparative analysis of the wild-type commensal Escherichia coli strain SE11 isolated from a healthy adult.</title>
        <authorList>
            <person name="Oshima K."/>
            <person name="Toh H."/>
            <person name="Ogura Y."/>
            <person name="Sasamoto H."/>
            <person name="Morita H."/>
            <person name="Park S.-H."/>
            <person name="Ooka T."/>
            <person name="Iyoda S."/>
            <person name="Taylor T.D."/>
            <person name="Hayashi T."/>
            <person name="Itoh K."/>
            <person name="Hattori M."/>
        </authorList>
    </citation>
    <scope>NUCLEOTIDE SEQUENCE [LARGE SCALE GENOMIC DNA]</scope>
    <source>
        <strain>SE11</strain>
    </source>
</reference>
<evidence type="ECO:0000255" key="1">
    <source>
        <dbReference type="HAMAP-Rule" id="MF_00634"/>
    </source>
</evidence>